<sequence length="2072" mass="231130">MGNKLSCSCAPLMRKAYRYEDSPWQSSRRRDGHLLSSFRLWAEVFHVSASGAGTVKWQQVSEDLVPVNITCIQDSPECIFHITAYNSQVDKILDVRLVQPGTRIGQASECFVYWKDPMTNDTWGLNFTSPIDAKQFRECCSPSFKFSRKASSSYSLKLDPPGKGKVKAKRKPLSTPASPSRVRQEPQCTCMSAEQYARLRTDPRVRGSSTLPRNVGSHRITDVDGQQQVGSGKVVSAVSSTSLYDNVASGGPGTNQGADTLPRQMKGGQQDRQDVANSGVNTNTPGVIVTGVGNVGSDMCGQNHVGSQVGNDDPAACQMDMDLSKSEGTQAGGGLHQSVGTCTSSSKGTGTRNKDFGDDMTRDAHSHDMHQHNVINNNTRRKTKSTEDMNVDTSTLKRMLKPMPSTESPVTSPEMGRRRYNYYNANAAQTLGHPPHMHQHGMAMGMGGGGGGGHHIMNNNTMGRASSQSSRFSGSRSSHEIGRGYPPRNLYLELERERSCIEGSPPSDNVMFDNQCYATTPSSSNGNSDQDQSYGQQQSSGQHPQQQQGPPQRSSRHQHHHQQAPNVTPTPGSPTSRLLLEYEMHLRNTLAKGMDAESYSLHTFEALLSQSMENLANAKSSTLPLPPHRPLSTIRDKERDRDRDGYYSDRNELIRERERERDRGYLSDHNSSFSNSRCASCIGESARAQWFRHSDGWRSGSSTIGSGSGHGMMTQQIPGSGHKRSPWDSLPSLRQDSSLNDSGYKSARADSLEQRAEFIRQDSLRSEYLSDRESRYGIVQQASIESTDSRMCYLTSSEISDDDRMSLTTAVSDEDDGESVMASPYKAKATGTAASSFNCTGAVRKAGFLSVKKWLLRKKHQIELARKRGWKGYWVCLKGTTLLFYPCDSREGRSVEAAPKHLIIVDGAIMQPIPEHPKRDYIFCLSTAFGDAYLFQAPCQVELENWVNSIHSACAAAFARHRGKTGTLHLLQEEIFRLEKAIESDHKLKHMAELQQSVVTDQETRHQIQTQILQWEENLERLHCEQFRLRCYMASLQSGELPNPKSLLTHVSRPTKNTLNKLGVFTVSSFHAFICARSPSLLNNLLAGRGATKRRPPMLSRSNSGSSRRSMQMNSRDEPEKTFKVAMPDNAYSTVYLRDAMSVEEFLASACARRNLNPMEHFVRVKKRRDMEDHNYFVPHRNDLIENYLHNHEFVEVCMKILYQVELQRTTLEQMWGFSVEAELIENAERQDELCCYVSRVEDKSVAMHNGIIKGDEIMVINGAIVSDLDMMYLESVLQEEQSLSMMMRSSRTEPPDLVGIMRVTDDMIDSLVCPPPPTDPPVMSEEMITGLIVPAPGWNGTSKDLYSPEAESSPATSFVDPAAMAAQLAVGGVGGVVVGGLGVAKPTSRTSSFEIENLLKTAEQETRKSSPTGSVTSSVSTTALTPSRQLTDAEKLRKVVMELVDTERTYVKHLNNLLEHYLEPMKRETFLSNAEINALFGNIHEIVTFQRQFLQNLEESLDLEPDFNKFEHCGQFRNVLFAIGSAFLYYVNHFKLYSSFCASHSKAQKVLHPNEGNHALQEFLAARNPKQQHSSTLESYLIKPIQRILKYPLLLQQMRNLTDTRADEHVHLCEALKGMEKVAEHINEMQRIHEEYGAIFDHLFRQHQKSCKQPIDLSPGDLLYYGGVEWLNISDFLGKIKKGLELHAMCFVFKSAVVFLCKERLRQKKKLMGVSSKNATNEVEIIRYQVLIPVTEVQVRASSAKDMDSHFLWELIHLRSQLQRRSEKVYVLSNSTADFRNAFLKTIRQIIRESVRNMSIPMKNFGGSSGSVSGHSSQGMGSMGYPGNSQTLERPKQQITIVHGSHTLGKPKKKSGSQRHSAGNIDYDNLSGSQEADDLPPSVGVVHYASGHTHGQQMQPAGFRGRSKTVGDVTEITCSSPEPHQQQQQQQQQQQQLMQQGHAHAHPHPHPHPREPPPPPIRQPHLHHHSSDIERIDPGTKSEGEEDSQQGTIRPKATLGRTPNHLTLSTTSTLSVGSTGSQARLIQSSHPPASYQPVLMKDLGSPVWKPRDMINLGTDPQSTTRKDDVKN</sequence>
<proteinExistence type="evidence at transcript level"/>
<dbReference type="EMBL" id="D86547">
    <property type="protein sequence ID" value="BAA13109.1"/>
    <property type="molecule type" value="mRNA"/>
</dbReference>
<dbReference type="EMBL" id="AE014296">
    <property type="protein sequence ID" value="AAF50755.3"/>
    <property type="molecule type" value="Genomic_DNA"/>
</dbReference>
<dbReference type="PIR" id="T13707">
    <property type="entry name" value="T13707"/>
</dbReference>
<dbReference type="RefSeq" id="NP_001097519.2">
    <molecule id="P91621-1"/>
    <property type="nucleotide sequence ID" value="NM_001104049.4"/>
</dbReference>
<dbReference type="RefSeq" id="NP_729084.1">
    <molecule id="P91621-1"/>
    <property type="nucleotide sequence ID" value="NM_168126.4"/>
</dbReference>
<dbReference type="SMR" id="P91621"/>
<dbReference type="BioGRID" id="68698">
    <property type="interactions" value="11"/>
</dbReference>
<dbReference type="FunCoup" id="P91621">
    <property type="interactions" value="209"/>
</dbReference>
<dbReference type="IntAct" id="P91621">
    <property type="interactions" value="3"/>
</dbReference>
<dbReference type="STRING" id="7227.FBpp0303156"/>
<dbReference type="GlyGen" id="P91621">
    <property type="glycosylation" value="2 sites"/>
</dbReference>
<dbReference type="PaxDb" id="7227-FBpp0111624"/>
<dbReference type="DNASU" id="43892"/>
<dbReference type="EnsemblMetazoa" id="FBtr0112708">
    <molecule id="P91621-1"/>
    <property type="protein sequence ID" value="FBpp0111620"/>
    <property type="gene ID" value="FBgn0085447"/>
</dbReference>
<dbReference type="EnsemblMetazoa" id="FBtr0330122">
    <molecule id="P91621-1"/>
    <property type="protein sequence ID" value="FBpp0303155"/>
    <property type="gene ID" value="FBgn0085447"/>
</dbReference>
<dbReference type="GeneID" id="43892"/>
<dbReference type="KEGG" id="dme:Dmel_CG34418"/>
<dbReference type="AGR" id="FB:FBgn0085447"/>
<dbReference type="CTD" id="43892"/>
<dbReference type="FlyBase" id="FBgn0085447">
    <property type="gene designation" value="sif"/>
</dbReference>
<dbReference type="VEuPathDB" id="VectorBase:FBgn0085447"/>
<dbReference type="eggNOG" id="KOG3519">
    <property type="taxonomic scope" value="Eukaryota"/>
</dbReference>
<dbReference type="GeneTree" id="ENSGT00940000174094"/>
<dbReference type="InParanoid" id="P91621"/>
<dbReference type="OrthoDB" id="8059989at2759"/>
<dbReference type="Reactome" id="R-DME-193648">
    <property type="pathway name" value="NRAGE signals death through JNK"/>
</dbReference>
<dbReference type="Reactome" id="R-DME-3928662">
    <property type="pathway name" value="EPHB-mediated forward signaling"/>
</dbReference>
<dbReference type="Reactome" id="R-DME-3928665">
    <property type="pathway name" value="EPH-ephrin mediated repulsion of cells"/>
</dbReference>
<dbReference type="Reactome" id="R-DME-416482">
    <property type="pathway name" value="G alpha (12/13) signalling events"/>
</dbReference>
<dbReference type="Reactome" id="R-DME-8980692">
    <property type="pathway name" value="RHOA GTPase cycle"/>
</dbReference>
<dbReference type="Reactome" id="R-DME-9013148">
    <property type="pathway name" value="CDC42 GTPase cycle"/>
</dbReference>
<dbReference type="Reactome" id="R-DME-9013149">
    <property type="pathway name" value="RAC1 GTPase cycle"/>
</dbReference>
<dbReference type="Reactome" id="R-DME-9013404">
    <property type="pathway name" value="RAC2 GTPase cycle"/>
</dbReference>
<dbReference type="Reactome" id="R-DME-9013423">
    <property type="pathway name" value="RAC3 GTPase cycle"/>
</dbReference>
<dbReference type="SignaLink" id="P91621"/>
<dbReference type="BioGRID-ORCS" id="43892">
    <property type="hits" value="0 hits in 3 CRISPR screens"/>
</dbReference>
<dbReference type="ChiTaRS" id="sif">
    <property type="organism name" value="fly"/>
</dbReference>
<dbReference type="GenomeRNAi" id="43892"/>
<dbReference type="Proteomes" id="UP000000803">
    <property type="component" value="Chromosome 3L"/>
</dbReference>
<dbReference type="Bgee" id="FBgn0085447">
    <property type="expression patterns" value="Expressed in medullary intrinsic neuron Mi1 (Drosophila) in insect head and 189 other cell types or tissues"/>
</dbReference>
<dbReference type="ExpressionAtlas" id="P91621">
    <property type="expression patterns" value="baseline"/>
</dbReference>
<dbReference type="GO" id="GO:0016020">
    <property type="term" value="C:membrane"/>
    <property type="evidence" value="ECO:0000318"/>
    <property type="project" value="GO_Central"/>
</dbReference>
<dbReference type="GO" id="GO:0045202">
    <property type="term" value="C:synapse"/>
    <property type="evidence" value="ECO:0000314"/>
    <property type="project" value="FlyBase"/>
</dbReference>
<dbReference type="GO" id="GO:0005085">
    <property type="term" value="F:guanyl-nucleotide exchange factor activity"/>
    <property type="evidence" value="ECO:0000250"/>
    <property type="project" value="FlyBase"/>
</dbReference>
<dbReference type="GO" id="GO:0030036">
    <property type="term" value="P:actin cytoskeleton organization"/>
    <property type="evidence" value="ECO:0000314"/>
    <property type="project" value="FlyBase"/>
</dbReference>
<dbReference type="GO" id="GO:0001654">
    <property type="term" value="P:eye development"/>
    <property type="evidence" value="ECO:0000315"/>
    <property type="project" value="UniProtKB"/>
</dbReference>
<dbReference type="GO" id="GO:0050772">
    <property type="term" value="P:positive regulation of axonogenesis"/>
    <property type="evidence" value="ECO:0000318"/>
    <property type="project" value="GO_Central"/>
</dbReference>
<dbReference type="GO" id="GO:0051491">
    <property type="term" value="P:positive regulation of filopodium assembly"/>
    <property type="evidence" value="ECO:0000315"/>
    <property type="project" value="FlyBase"/>
</dbReference>
<dbReference type="GO" id="GO:0050770">
    <property type="term" value="P:regulation of axonogenesis"/>
    <property type="evidence" value="ECO:0000315"/>
    <property type="project" value="FlyBase"/>
</dbReference>
<dbReference type="GO" id="GO:0050803">
    <property type="term" value="P:regulation of synapse structure or activity"/>
    <property type="evidence" value="ECO:0000304"/>
    <property type="project" value="FlyBase"/>
</dbReference>
<dbReference type="GO" id="GO:0007264">
    <property type="term" value="P:small GTPase-mediated signal transduction"/>
    <property type="evidence" value="ECO:0000318"/>
    <property type="project" value="GO_Central"/>
</dbReference>
<dbReference type="GO" id="GO:0007601">
    <property type="term" value="P:visual perception"/>
    <property type="evidence" value="ECO:0000315"/>
    <property type="project" value="UniProtKB"/>
</dbReference>
<dbReference type="CDD" id="cd00136">
    <property type="entry name" value="PDZ_canonical"/>
    <property type="match status" value="1"/>
</dbReference>
<dbReference type="CDD" id="cd01230">
    <property type="entry name" value="PH1_Tiam1_2"/>
    <property type="match status" value="1"/>
</dbReference>
<dbReference type="CDD" id="cd01255">
    <property type="entry name" value="PH2_Tiam1_2"/>
    <property type="match status" value="1"/>
</dbReference>
<dbReference type="CDD" id="cd00160">
    <property type="entry name" value="RhoGEF"/>
    <property type="match status" value="1"/>
</dbReference>
<dbReference type="FunFam" id="2.30.29.30:FF:000337">
    <property type="entry name" value="Protein still life, isoform SIF type"/>
    <property type="match status" value="1"/>
</dbReference>
<dbReference type="FunFam" id="2.30.29.30:FF:000373">
    <property type="entry name" value="Protein still life, isoform SIF type"/>
    <property type="match status" value="1"/>
</dbReference>
<dbReference type="FunFam" id="1.20.900.10:FF:000012">
    <property type="entry name" value="T cell lymphoma invasion and metastasis 1"/>
    <property type="match status" value="1"/>
</dbReference>
<dbReference type="FunFam" id="2.30.29.30:FF:000065">
    <property type="entry name" value="T cell lymphoma invasion and metastasis 1"/>
    <property type="match status" value="1"/>
</dbReference>
<dbReference type="Gene3D" id="2.30.42.10">
    <property type="match status" value="1"/>
</dbReference>
<dbReference type="Gene3D" id="6.10.140.680">
    <property type="match status" value="1"/>
</dbReference>
<dbReference type="Gene3D" id="1.20.900.10">
    <property type="entry name" value="Dbl homology (DH) domain"/>
    <property type="match status" value="1"/>
</dbReference>
<dbReference type="Gene3D" id="2.30.29.30">
    <property type="entry name" value="Pleckstrin-homology domain (PH domain)/Phosphotyrosine-binding domain (PTB)"/>
    <property type="match status" value="3"/>
</dbReference>
<dbReference type="InterPro" id="IPR035899">
    <property type="entry name" value="DBL_dom_sf"/>
</dbReference>
<dbReference type="InterPro" id="IPR000219">
    <property type="entry name" value="DH_dom"/>
</dbReference>
<dbReference type="InterPro" id="IPR001331">
    <property type="entry name" value="GDS_CDC24_CS"/>
</dbReference>
<dbReference type="InterPro" id="IPR001478">
    <property type="entry name" value="PDZ"/>
</dbReference>
<dbReference type="InterPro" id="IPR036034">
    <property type="entry name" value="PDZ_sf"/>
</dbReference>
<dbReference type="InterPro" id="IPR011993">
    <property type="entry name" value="PH-like_dom_sf"/>
</dbReference>
<dbReference type="InterPro" id="IPR001849">
    <property type="entry name" value="PH_domain"/>
</dbReference>
<dbReference type="InterPro" id="IPR055230">
    <property type="entry name" value="PH_Tiam1/2"/>
</dbReference>
<dbReference type="InterPro" id="IPR003116">
    <property type="entry name" value="RBD_dom"/>
</dbReference>
<dbReference type="InterPro" id="IPR043537">
    <property type="entry name" value="Tiam1/Tiam2/Sif"/>
</dbReference>
<dbReference type="InterPro" id="IPR040655">
    <property type="entry name" value="TIAM1_CC-Ex"/>
</dbReference>
<dbReference type="InterPro" id="IPR000697">
    <property type="entry name" value="WH1/EVH1_dom"/>
</dbReference>
<dbReference type="PANTHER" id="PTHR46001:SF3">
    <property type="entry name" value="PROTEIN STILL LIFE, ISOFORM SIF TYPE 1"/>
    <property type="match status" value="1"/>
</dbReference>
<dbReference type="PANTHER" id="PTHR46001">
    <property type="entry name" value="TIAM (MAMMALIAN TUMOR INVASION AND METASTASIS FACTOR) HOMOLOG"/>
    <property type="match status" value="1"/>
</dbReference>
<dbReference type="Pfam" id="PF00169">
    <property type="entry name" value="PH"/>
    <property type="match status" value="1"/>
</dbReference>
<dbReference type="Pfam" id="PF23014">
    <property type="entry name" value="PH_Tiam1"/>
    <property type="match status" value="1"/>
</dbReference>
<dbReference type="Pfam" id="PF02196">
    <property type="entry name" value="RBD"/>
    <property type="match status" value="1"/>
</dbReference>
<dbReference type="Pfam" id="PF00621">
    <property type="entry name" value="RhoGEF"/>
    <property type="match status" value="1"/>
</dbReference>
<dbReference type="Pfam" id="PF18385">
    <property type="entry name" value="Tiam_CC_Ex"/>
    <property type="match status" value="1"/>
</dbReference>
<dbReference type="SMART" id="SM00228">
    <property type="entry name" value="PDZ"/>
    <property type="match status" value="1"/>
</dbReference>
<dbReference type="SMART" id="SM00233">
    <property type="entry name" value="PH"/>
    <property type="match status" value="2"/>
</dbReference>
<dbReference type="SMART" id="SM00455">
    <property type="entry name" value="RBD"/>
    <property type="match status" value="1"/>
</dbReference>
<dbReference type="SMART" id="SM00325">
    <property type="entry name" value="RhoGEF"/>
    <property type="match status" value="1"/>
</dbReference>
<dbReference type="SMART" id="SM00461">
    <property type="entry name" value="WH1"/>
    <property type="match status" value="1"/>
</dbReference>
<dbReference type="SUPFAM" id="SSF48065">
    <property type="entry name" value="DBL homology domain (DH-domain)"/>
    <property type="match status" value="1"/>
</dbReference>
<dbReference type="SUPFAM" id="SSF50156">
    <property type="entry name" value="PDZ domain-like"/>
    <property type="match status" value="1"/>
</dbReference>
<dbReference type="SUPFAM" id="SSF50729">
    <property type="entry name" value="PH domain-like"/>
    <property type="match status" value="3"/>
</dbReference>
<dbReference type="PROSITE" id="PS00741">
    <property type="entry name" value="DH_1"/>
    <property type="match status" value="1"/>
</dbReference>
<dbReference type="PROSITE" id="PS50010">
    <property type="entry name" value="DH_2"/>
    <property type="match status" value="1"/>
</dbReference>
<dbReference type="PROSITE" id="PS50106">
    <property type="entry name" value="PDZ"/>
    <property type="match status" value="1"/>
</dbReference>
<dbReference type="PROSITE" id="PS50003">
    <property type="entry name" value="PH_DOMAIN"/>
    <property type="match status" value="1"/>
</dbReference>
<dbReference type="PROSITE" id="PS50898">
    <property type="entry name" value="RBD"/>
    <property type="match status" value="1"/>
</dbReference>
<dbReference type="PROSITE" id="PS50229">
    <property type="entry name" value="WH1"/>
    <property type="match status" value="1"/>
</dbReference>
<reference key="1">
    <citation type="journal article" date="1997" name="Science">
        <title>Still life, a protein in synaptic terminals of Drosophila homologous to GDP-GTP exchangers.</title>
        <authorList>
            <person name="Sone M."/>
        </authorList>
    </citation>
    <scope>NUCLEOTIDE SEQUENCE [MRNA]</scope>
    <scope>FUNCTION</scope>
    <scope>SUBCELLULAR LOCATION</scope>
    <scope>DEVELOPMENTAL STAGE</scope>
    <source>
        <tissue>Head</tissue>
    </source>
</reference>
<reference key="2">
    <citation type="journal article" date="1997" name="Science">
        <authorList>
            <person name="Sone M."/>
            <person name="Hoshino M."/>
            <person name="Suzuki E."/>
            <person name="Kuroda S."/>
            <person name="Kaibuchi K."/>
            <person name="Nakagoshi H."/>
            <person name="Saigo K."/>
            <person name="Nabeshima Y."/>
            <person name="Hama C."/>
        </authorList>
    </citation>
    <scope>ERRATUM OF PUBMED:8999801</scope>
</reference>
<reference key="3">
    <citation type="journal article" date="2000" name="Science">
        <title>The genome sequence of Drosophila melanogaster.</title>
        <authorList>
            <person name="Adams M.D."/>
            <person name="Celniker S.E."/>
            <person name="Holt R.A."/>
            <person name="Evans C.A."/>
            <person name="Gocayne J.D."/>
            <person name="Amanatides P.G."/>
            <person name="Scherer S.E."/>
            <person name="Li P.W."/>
            <person name="Hoskins R.A."/>
            <person name="Galle R.F."/>
            <person name="George R.A."/>
            <person name="Lewis S.E."/>
            <person name="Richards S."/>
            <person name="Ashburner M."/>
            <person name="Henderson S.N."/>
            <person name="Sutton G.G."/>
            <person name="Wortman J.R."/>
            <person name="Yandell M.D."/>
            <person name="Zhang Q."/>
            <person name="Chen L.X."/>
            <person name="Brandon R.C."/>
            <person name="Rogers Y.-H.C."/>
            <person name="Blazej R.G."/>
            <person name="Champe M."/>
            <person name="Pfeiffer B.D."/>
            <person name="Wan K.H."/>
            <person name="Doyle C."/>
            <person name="Baxter E.G."/>
            <person name="Helt G."/>
            <person name="Nelson C.R."/>
            <person name="Miklos G.L.G."/>
            <person name="Abril J.F."/>
            <person name="Agbayani A."/>
            <person name="An H.-J."/>
            <person name="Andrews-Pfannkoch C."/>
            <person name="Baldwin D."/>
            <person name="Ballew R.M."/>
            <person name="Basu A."/>
            <person name="Baxendale J."/>
            <person name="Bayraktaroglu L."/>
            <person name="Beasley E.M."/>
            <person name="Beeson K.Y."/>
            <person name="Benos P.V."/>
            <person name="Berman B.P."/>
            <person name="Bhandari D."/>
            <person name="Bolshakov S."/>
            <person name="Borkova D."/>
            <person name="Botchan M.R."/>
            <person name="Bouck J."/>
            <person name="Brokstein P."/>
            <person name="Brottier P."/>
            <person name="Burtis K.C."/>
            <person name="Busam D.A."/>
            <person name="Butler H."/>
            <person name="Cadieu E."/>
            <person name="Center A."/>
            <person name="Chandra I."/>
            <person name="Cherry J.M."/>
            <person name="Cawley S."/>
            <person name="Dahlke C."/>
            <person name="Davenport L.B."/>
            <person name="Davies P."/>
            <person name="de Pablos B."/>
            <person name="Delcher A."/>
            <person name="Deng Z."/>
            <person name="Mays A.D."/>
            <person name="Dew I."/>
            <person name="Dietz S.M."/>
            <person name="Dodson K."/>
            <person name="Doup L.E."/>
            <person name="Downes M."/>
            <person name="Dugan-Rocha S."/>
            <person name="Dunkov B.C."/>
            <person name="Dunn P."/>
            <person name="Durbin K.J."/>
            <person name="Evangelista C.C."/>
            <person name="Ferraz C."/>
            <person name="Ferriera S."/>
            <person name="Fleischmann W."/>
            <person name="Fosler C."/>
            <person name="Gabrielian A.E."/>
            <person name="Garg N.S."/>
            <person name="Gelbart W.M."/>
            <person name="Glasser K."/>
            <person name="Glodek A."/>
            <person name="Gong F."/>
            <person name="Gorrell J.H."/>
            <person name="Gu Z."/>
            <person name="Guan P."/>
            <person name="Harris M."/>
            <person name="Harris N.L."/>
            <person name="Harvey D.A."/>
            <person name="Heiman T.J."/>
            <person name="Hernandez J.R."/>
            <person name="Houck J."/>
            <person name="Hostin D."/>
            <person name="Houston K.A."/>
            <person name="Howland T.J."/>
            <person name="Wei M.-H."/>
            <person name="Ibegwam C."/>
            <person name="Jalali M."/>
            <person name="Kalush F."/>
            <person name="Karpen G.H."/>
            <person name="Ke Z."/>
            <person name="Kennison J.A."/>
            <person name="Ketchum K.A."/>
            <person name="Kimmel B.E."/>
            <person name="Kodira C.D."/>
            <person name="Kraft C.L."/>
            <person name="Kravitz S."/>
            <person name="Kulp D."/>
            <person name="Lai Z."/>
            <person name="Lasko P."/>
            <person name="Lei Y."/>
            <person name="Levitsky A.A."/>
            <person name="Li J.H."/>
            <person name="Li Z."/>
            <person name="Liang Y."/>
            <person name="Lin X."/>
            <person name="Liu X."/>
            <person name="Mattei B."/>
            <person name="McIntosh T.C."/>
            <person name="McLeod M.P."/>
            <person name="McPherson D."/>
            <person name="Merkulov G."/>
            <person name="Milshina N.V."/>
            <person name="Mobarry C."/>
            <person name="Morris J."/>
            <person name="Moshrefi A."/>
            <person name="Mount S.M."/>
            <person name="Moy M."/>
            <person name="Murphy B."/>
            <person name="Murphy L."/>
            <person name="Muzny D.M."/>
            <person name="Nelson D.L."/>
            <person name="Nelson D.R."/>
            <person name="Nelson K.A."/>
            <person name="Nixon K."/>
            <person name="Nusskern D.R."/>
            <person name="Pacleb J.M."/>
            <person name="Palazzolo M."/>
            <person name="Pittman G.S."/>
            <person name="Pan S."/>
            <person name="Pollard J."/>
            <person name="Puri V."/>
            <person name="Reese M.G."/>
            <person name="Reinert K."/>
            <person name="Remington K."/>
            <person name="Saunders R.D.C."/>
            <person name="Scheeler F."/>
            <person name="Shen H."/>
            <person name="Shue B.C."/>
            <person name="Siden-Kiamos I."/>
            <person name="Simpson M."/>
            <person name="Skupski M.P."/>
            <person name="Smith T.J."/>
            <person name="Spier E."/>
            <person name="Spradling A.C."/>
            <person name="Stapleton M."/>
            <person name="Strong R."/>
            <person name="Sun E."/>
            <person name="Svirskas R."/>
            <person name="Tector C."/>
            <person name="Turner R."/>
            <person name="Venter E."/>
            <person name="Wang A.H."/>
            <person name="Wang X."/>
            <person name="Wang Z.-Y."/>
            <person name="Wassarman D.A."/>
            <person name="Weinstock G.M."/>
            <person name="Weissenbach J."/>
            <person name="Williams S.M."/>
            <person name="Woodage T."/>
            <person name="Worley K.C."/>
            <person name="Wu D."/>
            <person name="Yang S."/>
            <person name="Yao Q.A."/>
            <person name="Ye J."/>
            <person name="Yeh R.-F."/>
            <person name="Zaveri J.S."/>
            <person name="Zhan M."/>
            <person name="Zhang G."/>
            <person name="Zhao Q."/>
            <person name="Zheng L."/>
            <person name="Zheng X.H."/>
            <person name="Zhong F.N."/>
            <person name="Zhong W."/>
            <person name="Zhou X."/>
            <person name="Zhu S.C."/>
            <person name="Zhu X."/>
            <person name="Smith H.O."/>
            <person name="Gibbs R.A."/>
            <person name="Myers E.W."/>
            <person name="Rubin G.M."/>
            <person name="Venter J.C."/>
        </authorList>
    </citation>
    <scope>NUCLEOTIDE SEQUENCE [LARGE SCALE GENOMIC DNA]</scope>
    <source>
        <strain>Berkeley</strain>
    </source>
</reference>
<reference key="4">
    <citation type="journal article" date="2002" name="Genome Biol.">
        <title>Annotation of the Drosophila melanogaster euchromatic genome: a systematic review.</title>
        <authorList>
            <person name="Misra S."/>
            <person name="Crosby M.A."/>
            <person name="Mungall C.J."/>
            <person name="Matthews B.B."/>
            <person name="Campbell K.S."/>
            <person name="Hradecky P."/>
            <person name="Huang Y."/>
            <person name="Kaminker J.S."/>
            <person name="Millburn G.H."/>
            <person name="Prochnik S.E."/>
            <person name="Smith C.D."/>
            <person name="Tupy J.L."/>
            <person name="Whitfield E.J."/>
            <person name="Bayraktaroglu L."/>
            <person name="Berman B.P."/>
            <person name="Bettencourt B.R."/>
            <person name="Celniker S.E."/>
            <person name="de Grey A.D.N.J."/>
            <person name="Drysdale R.A."/>
            <person name="Harris N.L."/>
            <person name="Richter J."/>
            <person name="Russo S."/>
            <person name="Schroeder A.J."/>
            <person name="Shu S.Q."/>
            <person name="Stapleton M."/>
            <person name="Yamada C."/>
            <person name="Ashburner M."/>
            <person name="Gelbart W.M."/>
            <person name="Rubin G.M."/>
            <person name="Lewis S.E."/>
        </authorList>
    </citation>
    <scope>GENOME REANNOTATION</scope>
    <scope>ALTERNATIVE SPLICING</scope>
    <source>
        <strain>Berkeley</strain>
    </source>
</reference>
<reference key="5">
    <citation type="journal article" date="2018" name="Am. J. Hum. Genet.">
        <title>Bi-allelic loss-of-function variants in DNMBP cause infantile cataracts.</title>
        <authorList>
            <person name="Ansar M."/>
            <person name="Chung H.L."/>
            <person name="Taylor R.L."/>
            <person name="Nazir A."/>
            <person name="Imtiaz S."/>
            <person name="Sarwar M.T."/>
            <person name="Manousopoulou A."/>
            <person name="Makrythanasis P."/>
            <person name="Saeed S."/>
            <person name="Falconnet E."/>
            <person name="Guipponi M."/>
            <person name="Pournaras C.J."/>
            <person name="Ansari M.A."/>
            <person name="Ranza E."/>
            <person name="Santoni F.A."/>
            <person name="Ahmed J."/>
            <person name="Shah I."/>
            <person name="Gul K."/>
            <person name="Black G.C."/>
            <person name="Bellen H.J."/>
            <person name="Antonarakis S.E."/>
        </authorList>
    </citation>
    <scope>FUNCTION</scope>
    <scope>TISSUE SPECIFICITY</scope>
    <scope>DEVELOPMENTAL STAGE</scope>
</reference>
<reference key="6">
    <citation type="journal article" date="2022" name="Am. J. Hum. Genet.">
        <title>Loss-of-function variants in TIAM1 are associated with developmental delay, intellectual disability, and seizures.</title>
        <authorList>
            <person name="Lu S."/>
            <person name="Hernan R."/>
            <person name="Marcogliese P.C."/>
            <person name="Huang Y."/>
            <person name="Gertler T.S."/>
            <person name="Akcaboy M."/>
            <person name="Liu S."/>
            <person name="Chung H.L."/>
            <person name="Pan X."/>
            <person name="Sun X."/>
            <person name="Oguz M.M."/>
            <person name="Oztoprak U."/>
            <person name="de Baaij J.H.F."/>
            <person name="Ivanisevic J."/>
            <person name="McGinnis E."/>
            <person name="Guillen Sacoto M.J."/>
            <person name="Chung W.K."/>
            <person name="Bellen H.J."/>
        </authorList>
    </citation>
    <scope>TISSUE SPECIFICITY</scope>
</reference>
<protein>
    <recommendedName>
        <fullName>Protein still life, isoform SIF type 1</fullName>
    </recommendedName>
</protein>
<evidence type="ECO:0000255" key="1"/>
<evidence type="ECO:0000255" key="2">
    <source>
        <dbReference type="PROSITE-ProRule" id="PRU00062"/>
    </source>
</evidence>
<evidence type="ECO:0000255" key="3">
    <source>
        <dbReference type="PROSITE-ProRule" id="PRU00143"/>
    </source>
</evidence>
<evidence type="ECO:0000255" key="4">
    <source>
        <dbReference type="PROSITE-ProRule" id="PRU00145"/>
    </source>
</evidence>
<evidence type="ECO:0000255" key="5">
    <source>
        <dbReference type="PROSITE-ProRule" id="PRU00262"/>
    </source>
</evidence>
<evidence type="ECO:0000255" key="6">
    <source>
        <dbReference type="PROSITE-ProRule" id="PRU00410"/>
    </source>
</evidence>
<evidence type="ECO:0000256" key="7">
    <source>
        <dbReference type="SAM" id="MobiDB-lite"/>
    </source>
</evidence>
<evidence type="ECO:0000269" key="8">
    <source>
    </source>
</evidence>
<evidence type="ECO:0000269" key="9">
    <source>
    </source>
</evidence>
<evidence type="ECO:0000269" key="10">
    <source>
    </source>
</evidence>
<evidence type="ECO:0000305" key="11"/>
<accession>P91621</accession>
<accession>Q9VRN7</accession>
<comment type="function">
    <text evidence="8 10">Regulates synaptic differentiation through the organization of actin cytoskeleton possibly by activating Rho-like GTPases. Is likely a factor in the cascade of Rac1 or Cdc42 in the neurons (PubMed:8999801). May play a role in maintaining proper septate junction functions. Required for eye development and most likely affects corneal lens-formation (PubMed:30290152).</text>
</comment>
<comment type="subcellular location">
    <subcellularLocation>
        <location evidence="10">Synapse</location>
    </subcellularLocation>
    <text evidence="10">Localizes to the submembranous region of synaptic terminals.</text>
</comment>
<comment type="alternative products">
    <event type="alternative splicing"/>
    <isoform>
        <id>P91621-1</id>
        <name>SIF type 1</name>
        <name>B</name>
        <sequence type="displayed"/>
    </isoform>
    <isoform>
        <id>P91620-2</id>
        <name>C</name>
        <sequence type="external"/>
    </isoform>
    <isoform>
        <id>P91620-1</id>
        <name>SIF type 2</name>
        <name>A</name>
        <sequence type="external"/>
    </isoform>
</comment>
<comment type="tissue specificity">
    <text evidence="8 9">Expressed in both larval and adult brains, mainly in a subset of neurons but not in glia (PubMed:35240055). In the adult eye is expressed in the two primary pigment cells in the subapical region of the eye. Also present in photoreceptors.</text>
</comment>
<comment type="developmental stage">
    <text evidence="8 10">At stage 14, expression occurs in each segment of the central nervous system. At stage 17, expression becomes restricted to the synaptic regions of the brain and ventral nerve cord, where synapses undergo maturation (PubMed:8999801). At 45 hours after puparium formation (apf) expression is enriched in the shaft of bristle cells in the sub-apical region. Present in all photoreceptors (PubMed:30290152).</text>
</comment>
<gene>
    <name type="primary">sif</name>
    <name type="ORF">CG34418</name>
</gene>
<keyword id="KW-0025">Alternative splicing</keyword>
<keyword id="KW-0217">Developmental protein</keyword>
<keyword id="KW-0344">Guanine-nucleotide releasing factor</keyword>
<keyword id="KW-0449">Lipoprotein</keyword>
<keyword id="KW-0519">Myristate</keyword>
<keyword id="KW-1185">Reference proteome</keyword>
<keyword id="KW-0677">Repeat</keyword>
<keyword id="KW-0770">Synapse</keyword>
<organism>
    <name type="scientific">Drosophila melanogaster</name>
    <name type="common">Fruit fly</name>
    <dbReference type="NCBI Taxonomy" id="7227"/>
    <lineage>
        <taxon>Eukaryota</taxon>
        <taxon>Metazoa</taxon>
        <taxon>Ecdysozoa</taxon>
        <taxon>Arthropoda</taxon>
        <taxon>Hexapoda</taxon>
        <taxon>Insecta</taxon>
        <taxon>Pterygota</taxon>
        <taxon>Neoptera</taxon>
        <taxon>Endopterygota</taxon>
        <taxon>Diptera</taxon>
        <taxon>Brachycera</taxon>
        <taxon>Muscomorpha</taxon>
        <taxon>Ephydroidea</taxon>
        <taxon>Drosophilidae</taxon>
        <taxon>Drosophila</taxon>
        <taxon>Sophophora</taxon>
    </lineage>
</organism>
<name>SIF1_DROME</name>
<feature type="initiator methionine" description="Removed" evidence="1">
    <location>
        <position position="1"/>
    </location>
</feature>
<feature type="chain" id="PRO_0000080974" description="Protein still life, isoform SIF type 1">
    <location>
        <begin position="2"/>
        <end position="2072"/>
    </location>
</feature>
<feature type="domain" description="WH1" evidence="6">
    <location>
        <begin position="29"/>
        <end position="147"/>
    </location>
</feature>
<feature type="domain" description="PH" evidence="4">
    <location>
        <begin position="840"/>
        <end position="958"/>
    </location>
</feature>
<feature type="domain" description="RBD" evidence="5">
    <location>
        <begin position="1121"/>
        <end position="1188"/>
    </location>
</feature>
<feature type="domain" description="PDZ" evidence="3">
    <location>
        <begin position="1204"/>
        <end position="1293"/>
    </location>
</feature>
<feature type="domain" description="DH" evidence="2">
    <location>
        <begin position="1436"/>
        <end position="1630"/>
    </location>
</feature>
<feature type="region of interest" description="Disordered" evidence="7">
    <location>
        <begin position="153"/>
        <end position="188"/>
    </location>
</feature>
<feature type="region of interest" description="Disordered" evidence="7">
    <location>
        <begin position="245"/>
        <end position="284"/>
    </location>
</feature>
<feature type="region of interest" description="Disordered" evidence="7">
    <location>
        <begin position="327"/>
        <end position="355"/>
    </location>
</feature>
<feature type="region of interest" description="Disordered" evidence="7">
    <location>
        <begin position="459"/>
        <end position="486"/>
    </location>
</feature>
<feature type="region of interest" description="Disordered" evidence="7">
    <location>
        <begin position="502"/>
        <end position="576"/>
    </location>
</feature>
<feature type="region of interest" description="Disordered" evidence="7">
    <location>
        <begin position="618"/>
        <end position="655"/>
    </location>
</feature>
<feature type="region of interest" description="Disordered" evidence="7">
    <location>
        <begin position="699"/>
        <end position="747"/>
    </location>
</feature>
<feature type="region of interest" description="Disordered" evidence="7">
    <location>
        <begin position="1088"/>
        <end position="1119"/>
    </location>
</feature>
<feature type="region of interest" description="Disordered" evidence="7">
    <location>
        <begin position="1403"/>
        <end position="1424"/>
    </location>
</feature>
<feature type="region of interest" description="Disordered" evidence="7">
    <location>
        <begin position="1803"/>
        <end position="1832"/>
    </location>
</feature>
<feature type="region of interest" description="Disordered" evidence="7">
    <location>
        <begin position="1844"/>
        <end position="2039"/>
    </location>
</feature>
<feature type="region of interest" description="Disordered" evidence="7">
    <location>
        <begin position="2051"/>
        <end position="2072"/>
    </location>
</feature>
<feature type="compositionally biased region" description="Polar residues" evidence="7">
    <location>
        <begin position="275"/>
        <end position="284"/>
    </location>
</feature>
<feature type="compositionally biased region" description="Low complexity" evidence="7">
    <location>
        <begin position="338"/>
        <end position="351"/>
    </location>
</feature>
<feature type="compositionally biased region" description="Low complexity" evidence="7">
    <location>
        <begin position="459"/>
        <end position="476"/>
    </location>
</feature>
<feature type="compositionally biased region" description="Low complexity" evidence="7">
    <location>
        <begin position="522"/>
        <end position="553"/>
    </location>
</feature>
<feature type="compositionally biased region" description="Polar residues" evidence="7">
    <location>
        <begin position="564"/>
        <end position="576"/>
    </location>
</feature>
<feature type="compositionally biased region" description="Basic and acidic residues" evidence="7">
    <location>
        <begin position="634"/>
        <end position="655"/>
    </location>
</feature>
<feature type="compositionally biased region" description="Polar residues" evidence="7">
    <location>
        <begin position="732"/>
        <end position="743"/>
    </location>
</feature>
<feature type="compositionally biased region" description="Low complexity" evidence="7">
    <location>
        <begin position="1100"/>
        <end position="1114"/>
    </location>
</feature>
<feature type="compositionally biased region" description="Low complexity" evidence="7">
    <location>
        <begin position="1410"/>
        <end position="1424"/>
    </location>
</feature>
<feature type="compositionally biased region" description="Low complexity" evidence="7">
    <location>
        <begin position="1811"/>
        <end position="1821"/>
    </location>
</feature>
<feature type="compositionally biased region" description="Low complexity" evidence="7">
    <location>
        <begin position="1926"/>
        <end position="1943"/>
    </location>
</feature>
<feature type="compositionally biased region" description="Basic and acidic residues" evidence="7">
    <location>
        <begin position="1970"/>
        <end position="1984"/>
    </location>
</feature>
<feature type="compositionally biased region" description="Low complexity" evidence="7">
    <location>
        <begin position="2007"/>
        <end position="2022"/>
    </location>
</feature>
<feature type="compositionally biased region" description="Polar residues" evidence="7">
    <location>
        <begin position="2023"/>
        <end position="2032"/>
    </location>
</feature>
<feature type="lipid moiety-binding region" description="N-myristoyl glycine" evidence="1">
    <location>
        <position position="2"/>
    </location>
</feature>
<feature type="sequence conflict" description="In Ref. 1; BAA13109." evidence="11" ref="1">
    <original>D</original>
    <variation>V</variation>
    <location>
        <position position="320"/>
    </location>
</feature>
<feature type="sequence conflict" description="In Ref. 1; BAA13109." evidence="11" ref="1">
    <location>
        <begin position="1374"/>
        <end position="1381"/>
    </location>
</feature>